<comment type="function">
    <text>Mitochondrial membrane ATP synthase (F(1)F(0) ATP synthase or Complex V) produces ATP from ADP in the presence of a proton gradient across the membrane which is generated by electron transport complexes of the respiratory chain. F-type ATPases consist of two structural domains, F(1) - containing the extramembraneous catalytic core and F(0) - containing the membrane proton channel, linked together by a central stalk and a peripheral stalk. During catalysis, ATP synthesis in the catalytic domain of F(1) is coupled via a rotary mechanism of the central stalk subunits to proton translocation. Subunits alpha and beta form the catalytic core in F(1). Rotation of the central stalk against the surrounding alpha(3)beta(3) subunits leads to hydrolysis of ATP in three separate catalytic sites on the beta subunits.</text>
</comment>
<comment type="catalytic activity">
    <reaction evidence="1">
        <text>ATP + H2O + 4 H(+)(in) = ADP + phosphate + 5 H(+)(out)</text>
        <dbReference type="Rhea" id="RHEA:57720"/>
        <dbReference type="ChEBI" id="CHEBI:15377"/>
        <dbReference type="ChEBI" id="CHEBI:15378"/>
        <dbReference type="ChEBI" id="CHEBI:30616"/>
        <dbReference type="ChEBI" id="CHEBI:43474"/>
        <dbReference type="ChEBI" id="CHEBI:456216"/>
        <dbReference type="EC" id="7.1.2.2"/>
    </reaction>
</comment>
<comment type="subunit">
    <text>F-type ATPases have 2 components, CF(1) - the catalytic core - and CF(0) - the membrane proton channel. CF(1) has five subunits: alpha(3), beta(3), gamma(1), delta(1), epsilon(1). CF(0) has three main subunits: a, b and c.</text>
</comment>
<comment type="subcellular location">
    <subcellularLocation>
        <location>Mitochondrion</location>
    </subcellularLocation>
    <subcellularLocation>
        <location>Mitochondrion inner membrane</location>
    </subcellularLocation>
    <text>Peripheral membrane protein.</text>
</comment>
<comment type="similarity">
    <text evidence="2">Belongs to the ATPase alpha/beta chains family.</text>
</comment>
<reference key="1">
    <citation type="journal article" date="1994" name="Plant Mol. Biol.">
        <title>Cloning and characterization of five cDNAs for genes differentially expressed during fruit development of kiwifruit (Actinidia deliciosa var. deliciosa).</title>
        <authorList>
            <person name="Ledger S.E."/>
            <person name="Gardner R.C."/>
        </authorList>
    </citation>
    <scope>NUCLEOTIDE SEQUENCE [MRNA]</scope>
    <source>
        <strain>cv. Hayward</strain>
        <tissue>Fruit</tissue>
    </source>
</reference>
<protein>
    <recommendedName>
        <fullName>ATP synthase subunit beta, mitochondrial</fullName>
        <ecNumber>7.1.2.2</ecNumber>
    </recommendedName>
</protein>
<proteinExistence type="evidence at transcript level"/>
<name>ATPBM_ACTDE</name>
<sequence length="173" mass="19011">VQAIYVPADDLTDPAPATTFAHLDATTVLSRQISELGIYPAVDPLDSTSRMLSPHILGEEHYNTARGVQKVLQNYKNLQDIIAILGMDELSEDDKLTVARARKIQRFLSQPFHVAEVFTGAPGKYVDLKESITSFQGVLDGKFDDLPEQSFYMVGGIEEVIAKAEKISKESAA</sequence>
<feature type="chain" id="PRO_0000144554" description="ATP synthase subunit beta, mitochondrial">
    <location>
        <begin position="1" status="less than"/>
        <end position="173"/>
    </location>
</feature>
<feature type="non-terminal residue">
    <location>
        <position position="1"/>
    </location>
</feature>
<evidence type="ECO:0000255" key="1">
    <source>
        <dbReference type="PROSITE-ProRule" id="PRU10106"/>
    </source>
</evidence>
<evidence type="ECO:0000305" key="2"/>
<keyword id="KW-0066">ATP synthesis</keyword>
<keyword id="KW-0067">ATP-binding</keyword>
<keyword id="KW-0139">CF(1)</keyword>
<keyword id="KW-0375">Hydrogen ion transport</keyword>
<keyword id="KW-0406">Ion transport</keyword>
<keyword id="KW-0472">Membrane</keyword>
<keyword id="KW-0496">Mitochondrion</keyword>
<keyword id="KW-0999">Mitochondrion inner membrane</keyword>
<keyword id="KW-0547">Nucleotide-binding</keyword>
<keyword id="KW-1278">Translocase</keyword>
<keyword id="KW-0813">Transport</keyword>
<organism>
    <name type="scientific">Actinidia deliciosa</name>
    <name type="common">Kiwi</name>
    <dbReference type="NCBI Taxonomy" id="3627"/>
    <lineage>
        <taxon>Eukaryota</taxon>
        <taxon>Viridiplantae</taxon>
        <taxon>Streptophyta</taxon>
        <taxon>Embryophyta</taxon>
        <taxon>Tracheophyta</taxon>
        <taxon>Spermatophyta</taxon>
        <taxon>Magnoliopsida</taxon>
        <taxon>eudicotyledons</taxon>
        <taxon>Gunneridae</taxon>
        <taxon>Pentapetalae</taxon>
        <taxon>asterids</taxon>
        <taxon>Ericales</taxon>
        <taxon>Actinidiaceae</taxon>
        <taxon>Actinidia</taxon>
    </lineage>
</organism>
<accession>P43395</accession>
<gene>
    <name type="primary">ATPB</name>
    <name type="ORF">pKIWI505</name>
</gene>
<dbReference type="EC" id="7.1.2.2"/>
<dbReference type="EMBL" id="L27812">
    <property type="protein sequence ID" value="AAA53073.1"/>
    <property type="molecule type" value="mRNA"/>
</dbReference>
<dbReference type="SMR" id="P43395"/>
<dbReference type="GO" id="GO:0005743">
    <property type="term" value="C:mitochondrial inner membrane"/>
    <property type="evidence" value="ECO:0007669"/>
    <property type="project" value="UniProtKB-SubCell"/>
</dbReference>
<dbReference type="GO" id="GO:0045259">
    <property type="term" value="C:proton-transporting ATP synthase complex"/>
    <property type="evidence" value="ECO:0007669"/>
    <property type="project" value="UniProtKB-KW"/>
</dbReference>
<dbReference type="GO" id="GO:0005524">
    <property type="term" value="F:ATP binding"/>
    <property type="evidence" value="ECO:0007669"/>
    <property type="project" value="UniProtKB-KW"/>
</dbReference>
<dbReference type="GO" id="GO:0046933">
    <property type="term" value="F:proton-transporting ATP synthase activity, rotational mechanism"/>
    <property type="evidence" value="ECO:0007669"/>
    <property type="project" value="TreeGrafter"/>
</dbReference>
<dbReference type="GO" id="GO:0042776">
    <property type="term" value="P:proton motive force-driven mitochondrial ATP synthesis"/>
    <property type="evidence" value="ECO:0007669"/>
    <property type="project" value="TreeGrafter"/>
</dbReference>
<dbReference type="CDD" id="cd18110">
    <property type="entry name" value="ATP-synt_F1_beta_C"/>
    <property type="match status" value="1"/>
</dbReference>
<dbReference type="FunFam" id="1.10.1140.10:FF:000001">
    <property type="entry name" value="ATP synthase subunit beta"/>
    <property type="match status" value="1"/>
</dbReference>
<dbReference type="Gene3D" id="1.10.1140.10">
    <property type="entry name" value="Bovine Mitochondrial F1-atpase, Atp Synthase Beta Chain, Chain D, domain 3"/>
    <property type="match status" value="1"/>
</dbReference>
<dbReference type="Gene3D" id="3.40.50.300">
    <property type="entry name" value="P-loop containing nucleotide triphosphate hydrolases"/>
    <property type="match status" value="1"/>
</dbReference>
<dbReference type="InterPro" id="IPR055190">
    <property type="entry name" value="ATP-synt_VA_C"/>
</dbReference>
<dbReference type="InterPro" id="IPR020003">
    <property type="entry name" value="ATPase_a/bsu_AS"/>
</dbReference>
<dbReference type="InterPro" id="IPR050053">
    <property type="entry name" value="ATPase_alpha/beta_chains"/>
</dbReference>
<dbReference type="InterPro" id="IPR000194">
    <property type="entry name" value="ATPase_F1/V1/A1_a/bsu_nucl-bd"/>
</dbReference>
<dbReference type="InterPro" id="IPR024034">
    <property type="entry name" value="ATPase_F1/V1_b/a_C"/>
</dbReference>
<dbReference type="InterPro" id="IPR027417">
    <property type="entry name" value="P-loop_NTPase"/>
</dbReference>
<dbReference type="PANTHER" id="PTHR15184">
    <property type="entry name" value="ATP SYNTHASE"/>
    <property type="match status" value="1"/>
</dbReference>
<dbReference type="PANTHER" id="PTHR15184:SF82">
    <property type="entry name" value="ATP SYNTHASE SUBUNIT BETA, MITOCHONDRIAL"/>
    <property type="match status" value="1"/>
</dbReference>
<dbReference type="Pfam" id="PF00006">
    <property type="entry name" value="ATP-synt_ab"/>
    <property type="match status" value="1"/>
</dbReference>
<dbReference type="Pfam" id="PF22919">
    <property type="entry name" value="ATP-synt_VA_C"/>
    <property type="match status" value="1"/>
</dbReference>
<dbReference type="SUPFAM" id="SSF47917">
    <property type="entry name" value="C-terminal domain of alpha and beta subunits of F1 ATP synthase"/>
    <property type="match status" value="1"/>
</dbReference>
<dbReference type="SUPFAM" id="SSF52540">
    <property type="entry name" value="P-loop containing nucleoside triphosphate hydrolases"/>
    <property type="match status" value="1"/>
</dbReference>
<dbReference type="PROSITE" id="PS00152">
    <property type="entry name" value="ATPASE_ALPHA_BETA"/>
    <property type="match status" value="1"/>
</dbReference>